<evidence type="ECO:0000255" key="1">
    <source>
        <dbReference type="HAMAP-Rule" id="MF_00075"/>
    </source>
</evidence>
<keyword id="KW-0963">Cytoplasm</keyword>
<keyword id="KW-0396">Initiation factor</keyword>
<keyword id="KW-0648">Protein biosynthesis</keyword>
<keyword id="KW-1185">Reference proteome</keyword>
<keyword id="KW-0694">RNA-binding</keyword>
<keyword id="KW-0699">rRNA-binding</keyword>
<protein>
    <recommendedName>
        <fullName evidence="1">Translation initiation factor IF-1</fullName>
    </recommendedName>
</protein>
<proteinExistence type="inferred from homology"/>
<reference key="1">
    <citation type="journal article" date="2005" name="PLoS Genet.">
        <title>Life in hot carbon monoxide: the complete genome sequence of Carboxydothermus hydrogenoformans Z-2901.</title>
        <authorList>
            <person name="Wu M."/>
            <person name="Ren Q."/>
            <person name="Durkin A.S."/>
            <person name="Daugherty S.C."/>
            <person name="Brinkac L.M."/>
            <person name="Dodson R.J."/>
            <person name="Madupu R."/>
            <person name="Sullivan S.A."/>
            <person name="Kolonay J.F."/>
            <person name="Nelson W.C."/>
            <person name="Tallon L.J."/>
            <person name="Jones K.M."/>
            <person name="Ulrich L.E."/>
            <person name="Gonzalez J.M."/>
            <person name="Zhulin I.B."/>
            <person name="Robb F.T."/>
            <person name="Eisen J.A."/>
        </authorList>
    </citation>
    <scope>NUCLEOTIDE SEQUENCE [LARGE SCALE GENOMIC DNA]</scope>
    <source>
        <strain>ATCC BAA-161 / DSM 6008 / Z-2901</strain>
    </source>
</reference>
<comment type="function">
    <text evidence="1">One of the essential components for the initiation of protein synthesis. Stabilizes the binding of IF-2 and IF-3 on the 30S subunit to which N-formylmethionyl-tRNA(fMet) subsequently binds. Helps modulate mRNA selection, yielding the 30S pre-initiation complex (PIC). Upon addition of the 50S ribosomal subunit IF-1, IF-2 and IF-3 are released leaving the mature 70S translation initiation complex.</text>
</comment>
<comment type="subunit">
    <text evidence="1">Component of the 30S ribosomal translation pre-initiation complex which assembles on the 30S ribosome in the order IF-2 and IF-3, IF-1 and N-formylmethionyl-tRNA(fMet); mRNA recruitment can occur at any time during PIC assembly.</text>
</comment>
<comment type="subcellular location">
    <subcellularLocation>
        <location evidence="1">Cytoplasm</location>
    </subcellularLocation>
</comment>
<comment type="similarity">
    <text evidence="1">Belongs to the IF-1 family.</text>
</comment>
<dbReference type="EMBL" id="CP000141">
    <property type="protein sequence ID" value="ABB14791.1"/>
    <property type="molecule type" value="Genomic_DNA"/>
</dbReference>
<dbReference type="RefSeq" id="WP_011345168.1">
    <property type="nucleotide sequence ID" value="NC_007503.1"/>
</dbReference>
<dbReference type="SMR" id="Q3A9T9"/>
<dbReference type="FunCoup" id="Q3A9T9">
    <property type="interactions" value="329"/>
</dbReference>
<dbReference type="STRING" id="246194.CHY_2286"/>
<dbReference type="KEGG" id="chy:CHY_2286"/>
<dbReference type="eggNOG" id="COG0361">
    <property type="taxonomic scope" value="Bacteria"/>
</dbReference>
<dbReference type="HOGENOM" id="CLU_151267_1_0_9"/>
<dbReference type="InParanoid" id="Q3A9T9"/>
<dbReference type="OrthoDB" id="9803250at2"/>
<dbReference type="Proteomes" id="UP000002706">
    <property type="component" value="Chromosome"/>
</dbReference>
<dbReference type="GO" id="GO:0005829">
    <property type="term" value="C:cytosol"/>
    <property type="evidence" value="ECO:0007669"/>
    <property type="project" value="TreeGrafter"/>
</dbReference>
<dbReference type="GO" id="GO:0043022">
    <property type="term" value="F:ribosome binding"/>
    <property type="evidence" value="ECO:0007669"/>
    <property type="project" value="UniProtKB-UniRule"/>
</dbReference>
<dbReference type="GO" id="GO:0019843">
    <property type="term" value="F:rRNA binding"/>
    <property type="evidence" value="ECO:0007669"/>
    <property type="project" value="UniProtKB-UniRule"/>
</dbReference>
<dbReference type="GO" id="GO:0003743">
    <property type="term" value="F:translation initiation factor activity"/>
    <property type="evidence" value="ECO:0007669"/>
    <property type="project" value="UniProtKB-UniRule"/>
</dbReference>
<dbReference type="CDD" id="cd04451">
    <property type="entry name" value="S1_IF1"/>
    <property type="match status" value="1"/>
</dbReference>
<dbReference type="FunFam" id="2.40.50.140:FF:000002">
    <property type="entry name" value="Translation initiation factor IF-1"/>
    <property type="match status" value="1"/>
</dbReference>
<dbReference type="Gene3D" id="2.40.50.140">
    <property type="entry name" value="Nucleic acid-binding proteins"/>
    <property type="match status" value="1"/>
</dbReference>
<dbReference type="HAMAP" id="MF_00075">
    <property type="entry name" value="IF_1"/>
    <property type="match status" value="1"/>
</dbReference>
<dbReference type="InterPro" id="IPR012340">
    <property type="entry name" value="NA-bd_OB-fold"/>
</dbReference>
<dbReference type="InterPro" id="IPR006196">
    <property type="entry name" value="RNA-binding_domain_S1_IF1"/>
</dbReference>
<dbReference type="InterPro" id="IPR003029">
    <property type="entry name" value="S1_domain"/>
</dbReference>
<dbReference type="InterPro" id="IPR004368">
    <property type="entry name" value="TIF_IF1"/>
</dbReference>
<dbReference type="NCBIfam" id="TIGR00008">
    <property type="entry name" value="infA"/>
    <property type="match status" value="1"/>
</dbReference>
<dbReference type="PANTHER" id="PTHR33370">
    <property type="entry name" value="TRANSLATION INITIATION FACTOR IF-1, CHLOROPLASTIC"/>
    <property type="match status" value="1"/>
</dbReference>
<dbReference type="PANTHER" id="PTHR33370:SF1">
    <property type="entry name" value="TRANSLATION INITIATION FACTOR IF-1, CHLOROPLASTIC"/>
    <property type="match status" value="1"/>
</dbReference>
<dbReference type="Pfam" id="PF01176">
    <property type="entry name" value="eIF-1a"/>
    <property type="match status" value="1"/>
</dbReference>
<dbReference type="SMART" id="SM00316">
    <property type="entry name" value="S1"/>
    <property type="match status" value="1"/>
</dbReference>
<dbReference type="SUPFAM" id="SSF50249">
    <property type="entry name" value="Nucleic acid-binding proteins"/>
    <property type="match status" value="1"/>
</dbReference>
<dbReference type="PROSITE" id="PS50832">
    <property type="entry name" value="S1_IF1_TYPE"/>
    <property type="match status" value="1"/>
</dbReference>
<organism>
    <name type="scientific">Carboxydothermus hydrogenoformans (strain ATCC BAA-161 / DSM 6008 / Z-2901)</name>
    <dbReference type="NCBI Taxonomy" id="246194"/>
    <lineage>
        <taxon>Bacteria</taxon>
        <taxon>Bacillati</taxon>
        <taxon>Bacillota</taxon>
        <taxon>Clostridia</taxon>
        <taxon>Thermoanaerobacterales</taxon>
        <taxon>Thermoanaerobacteraceae</taxon>
        <taxon>Carboxydothermus</taxon>
    </lineage>
</organism>
<sequence>MSKDDVIEVEGTVVEPLPNAMFRVELDNGHKVLAHVSGKIRMNFIRILPGDRVTVELSPYDLTRGRIIYRHK</sequence>
<gene>
    <name evidence="1" type="primary">infA</name>
    <name type="ordered locus">CHY_2286</name>
</gene>
<feature type="chain" id="PRO_0000263780" description="Translation initiation factor IF-1">
    <location>
        <begin position="1"/>
        <end position="72"/>
    </location>
</feature>
<feature type="domain" description="S1-like" evidence="1">
    <location>
        <begin position="1"/>
        <end position="72"/>
    </location>
</feature>
<accession>Q3A9T9</accession>
<name>IF1_CARHZ</name>